<comment type="function">
    <text evidence="2">Required for pre-mRNA splicing as component of the activated spliceosome. Involved in the first step of pre-mRNA splicing. Binds directly to the internal stem-loop (ISL) domain of the U6 snRNA and to the pre-mRNA intron near the 5' splice site during the activation and catalytic phases of the spliceosome cycle.</text>
</comment>
<comment type="subunit">
    <text evidence="2">Component of the pre-catalytic and catalytic spliceosome complexes. Component of the postcatalytic spliceosome P complex.</text>
</comment>
<comment type="subcellular location">
    <subcellularLocation>
        <location evidence="2">Nucleus</location>
    </subcellularLocation>
    <subcellularLocation>
        <location evidence="2">Cytoplasm</location>
    </subcellularLocation>
    <text evidence="2">Nearly exclusively nuclear. May be shuttling between the nucleus and the cytosol.</text>
</comment>
<comment type="domain">
    <text evidence="1">The C-terminal RRM domain and the zinc finger motif are necessary for RNA-binding.</text>
</comment>
<comment type="similarity">
    <text evidence="6">Belongs to the SLT11 family.</text>
</comment>
<accession>Q5ZM16</accession>
<organism>
    <name type="scientific">Gallus gallus</name>
    <name type="common">Chicken</name>
    <dbReference type="NCBI Taxonomy" id="9031"/>
    <lineage>
        <taxon>Eukaryota</taxon>
        <taxon>Metazoa</taxon>
        <taxon>Chordata</taxon>
        <taxon>Craniata</taxon>
        <taxon>Vertebrata</taxon>
        <taxon>Euteleostomi</taxon>
        <taxon>Archelosauria</taxon>
        <taxon>Archosauria</taxon>
        <taxon>Dinosauria</taxon>
        <taxon>Saurischia</taxon>
        <taxon>Theropoda</taxon>
        <taxon>Coelurosauria</taxon>
        <taxon>Aves</taxon>
        <taxon>Neognathae</taxon>
        <taxon>Galloanserae</taxon>
        <taxon>Galliformes</taxon>
        <taxon>Phasianidae</taxon>
        <taxon>Phasianinae</taxon>
        <taxon>Gallus</taxon>
    </lineage>
</organism>
<proteinExistence type="evidence at transcript level"/>
<name>RBM22_CHICK</name>
<dbReference type="EMBL" id="AJ719568">
    <property type="protein sequence ID" value="CAG31227.1"/>
    <property type="molecule type" value="mRNA"/>
</dbReference>
<dbReference type="RefSeq" id="NP_001006151.1">
    <property type="nucleotide sequence ID" value="NM_001006151.1"/>
</dbReference>
<dbReference type="SMR" id="Q5ZM16"/>
<dbReference type="FunCoup" id="Q5ZM16">
    <property type="interactions" value="2588"/>
</dbReference>
<dbReference type="STRING" id="9031.ENSGALP00000007237"/>
<dbReference type="PaxDb" id="9031-ENSGALP00000007237"/>
<dbReference type="GeneID" id="416270"/>
<dbReference type="KEGG" id="gga:416270"/>
<dbReference type="CTD" id="55696"/>
<dbReference type="VEuPathDB" id="HostDB:geneid_416270"/>
<dbReference type="eggNOG" id="KOG0153">
    <property type="taxonomic scope" value="Eukaryota"/>
</dbReference>
<dbReference type="InParanoid" id="Q5ZM16"/>
<dbReference type="OrthoDB" id="10259600at2759"/>
<dbReference type="PhylomeDB" id="Q5ZM16"/>
<dbReference type="PRO" id="PR:Q5ZM16"/>
<dbReference type="Proteomes" id="UP000000539">
    <property type="component" value="Unassembled WGS sequence"/>
</dbReference>
<dbReference type="GO" id="GO:0005737">
    <property type="term" value="C:cytoplasm"/>
    <property type="evidence" value="ECO:0000250"/>
    <property type="project" value="UniProtKB"/>
</dbReference>
<dbReference type="GO" id="GO:0005634">
    <property type="term" value="C:nucleus"/>
    <property type="evidence" value="ECO:0000250"/>
    <property type="project" value="UniProtKB"/>
</dbReference>
<dbReference type="GO" id="GO:0000974">
    <property type="term" value="C:Prp19 complex"/>
    <property type="evidence" value="ECO:0000318"/>
    <property type="project" value="GO_Central"/>
</dbReference>
<dbReference type="GO" id="GO:0071006">
    <property type="term" value="C:U2-type catalytic step 1 spliceosome"/>
    <property type="evidence" value="ECO:0000318"/>
    <property type="project" value="GO_Central"/>
</dbReference>
<dbReference type="GO" id="GO:0071007">
    <property type="term" value="C:U2-type catalytic step 2 spliceosome"/>
    <property type="evidence" value="ECO:0000318"/>
    <property type="project" value="GO_Central"/>
</dbReference>
<dbReference type="GO" id="GO:0036002">
    <property type="term" value="F:pre-mRNA binding"/>
    <property type="evidence" value="ECO:0000250"/>
    <property type="project" value="UniProtKB"/>
</dbReference>
<dbReference type="GO" id="GO:0017070">
    <property type="term" value="F:U6 snRNA binding"/>
    <property type="evidence" value="ECO:0000250"/>
    <property type="project" value="UniProtKB"/>
</dbReference>
<dbReference type="GO" id="GO:0008270">
    <property type="term" value="F:zinc ion binding"/>
    <property type="evidence" value="ECO:0007669"/>
    <property type="project" value="UniProtKB-KW"/>
</dbReference>
<dbReference type="GO" id="GO:0071466">
    <property type="term" value="P:cellular response to xenobiotic stimulus"/>
    <property type="evidence" value="ECO:0000250"/>
    <property type="project" value="UniProtKB"/>
</dbReference>
<dbReference type="GO" id="GO:0045292">
    <property type="term" value="P:mRNA cis splicing, via spliceosome"/>
    <property type="evidence" value="ECO:0000250"/>
    <property type="project" value="UniProtKB"/>
</dbReference>
<dbReference type="GO" id="GO:0033120">
    <property type="term" value="P:positive regulation of RNA splicing"/>
    <property type="evidence" value="ECO:0000250"/>
    <property type="project" value="UniProtKB"/>
</dbReference>
<dbReference type="CDD" id="cd12224">
    <property type="entry name" value="RRM_RBM22"/>
    <property type="match status" value="1"/>
</dbReference>
<dbReference type="FunFam" id="3.30.70.330:FF:000137">
    <property type="entry name" value="pre-mRNA-splicing factor RBM22"/>
    <property type="match status" value="1"/>
</dbReference>
<dbReference type="FunFam" id="4.10.1000.10:FF:000006">
    <property type="entry name" value="Putative pre-mrna-splicing factor rbm22"/>
    <property type="match status" value="1"/>
</dbReference>
<dbReference type="Gene3D" id="3.30.70.330">
    <property type="match status" value="1"/>
</dbReference>
<dbReference type="Gene3D" id="4.10.1000.10">
    <property type="entry name" value="Zinc finger, CCCH-type"/>
    <property type="match status" value="1"/>
</dbReference>
<dbReference type="InterPro" id="IPR039171">
    <property type="entry name" value="Cwc2/Slt11"/>
</dbReference>
<dbReference type="InterPro" id="IPR012677">
    <property type="entry name" value="Nucleotide-bd_a/b_plait_sf"/>
</dbReference>
<dbReference type="InterPro" id="IPR035979">
    <property type="entry name" value="RBD_domain_sf"/>
</dbReference>
<dbReference type="InterPro" id="IPR000504">
    <property type="entry name" value="RRM_dom"/>
</dbReference>
<dbReference type="InterPro" id="IPR048995">
    <property type="entry name" value="STL11/RBM22-like_N"/>
</dbReference>
<dbReference type="InterPro" id="IPR000571">
    <property type="entry name" value="Znf_CCCH"/>
</dbReference>
<dbReference type="InterPro" id="IPR036855">
    <property type="entry name" value="Znf_CCCH_sf"/>
</dbReference>
<dbReference type="PANTHER" id="PTHR14089">
    <property type="entry name" value="PRE-MRNA-SPLICING FACTOR RBM22"/>
    <property type="match status" value="1"/>
</dbReference>
<dbReference type="PANTHER" id="PTHR14089:SF6">
    <property type="entry name" value="PRE-MRNA-SPLICING FACTOR RBM22"/>
    <property type="match status" value="1"/>
</dbReference>
<dbReference type="Pfam" id="PF00076">
    <property type="entry name" value="RRM_1"/>
    <property type="match status" value="1"/>
</dbReference>
<dbReference type="Pfam" id="PF21369">
    <property type="entry name" value="STL11_N"/>
    <property type="match status" value="1"/>
</dbReference>
<dbReference type="SMART" id="SM00360">
    <property type="entry name" value="RRM"/>
    <property type="match status" value="1"/>
</dbReference>
<dbReference type="SMART" id="SM00356">
    <property type="entry name" value="ZnF_C3H1"/>
    <property type="match status" value="1"/>
</dbReference>
<dbReference type="SUPFAM" id="SSF90229">
    <property type="entry name" value="CCCH zinc finger"/>
    <property type="match status" value="1"/>
</dbReference>
<dbReference type="SUPFAM" id="SSF54928">
    <property type="entry name" value="RNA-binding domain, RBD"/>
    <property type="match status" value="1"/>
</dbReference>
<dbReference type="PROSITE" id="PS50102">
    <property type="entry name" value="RRM"/>
    <property type="match status" value="1"/>
</dbReference>
<dbReference type="PROSITE" id="PS50103">
    <property type="entry name" value="ZF_C3H1"/>
    <property type="match status" value="1"/>
</dbReference>
<feature type="chain" id="PRO_0000250551" description="Pre-mRNA-splicing factor RBM22">
    <location>
        <begin position="1"/>
        <end position="420"/>
    </location>
</feature>
<feature type="domain" description="RRM" evidence="3">
    <location>
        <begin position="232"/>
        <end position="305"/>
    </location>
</feature>
<feature type="zinc finger region" description="C3H1-type" evidence="4">
    <location>
        <begin position="159"/>
        <end position="186"/>
    </location>
</feature>
<feature type="region of interest" description="Disordered" evidence="5">
    <location>
        <begin position="303"/>
        <end position="343"/>
    </location>
</feature>
<feature type="region of interest" description="Disordered" evidence="5">
    <location>
        <begin position="372"/>
        <end position="420"/>
    </location>
</feature>
<feature type="compositionally biased region" description="Basic and acidic residues" evidence="5">
    <location>
        <begin position="309"/>
        <end position="318"/>
    </location>
</feature>
<gene>
    <name type="primary">RBM22</name>
    <name type="ORF">RCJMB04_3g16</name>
</gene>
<sequence>MSTSLGSNTYNRQNWEDADFPILCQTCLGENPYIRMTKEKYGKECKICARPFTVFRWCPGVRMRFKKTEVCQTCSKLKNVCQTCLLDLEYGLPIQVRDAGLSLKDEMPKSDVNKEYYTQNMEREIANSDGTRPVGALGKATSTSDMLLKLARTTPYYKRNRPHICSFWVKGECKRGEECPYRHEKPTDPDDPLADQDIKDRYYGINDPVADKLLKRASTMPRLDPPDDKTITTLYVGGLGDTITESDLRNHFYQFGEIRTITVVQRQQCAFIQFATRQAAEVAAEKSFNKLIVNGRRLNVKWGRSQAARGKEKDKEGTTESGIKLEPVPGLPGALPPPPAAEEEASANYFNLPPSGPPAVVNIALPPPPGIAPPPPPGFGPHMFHAMGPPPPFMRAPGPIHYPSQDPQRMGAHAGKHSSP</sequence>
<keyword id="KW-0963">Cytoplasm</keyword>
<keyword id="KW-0479">Metal-binding</keyword>
<keyword id="KW-0507">mRNA processing</keyword>
<keyword id="KW-0508">mRNA splicing</keyword>
<keyword id="KW-0539">Nucleus</keyword>
<keyword id="KW-1185">Reference proteome</keyword>
<keyword id="KW-0694">RNA-binding</keyword>
<keyword id="KW-0747">Spliceosome</keyword>
<keyword id="KW-0862">Zinc</keyword>
<keyword id="KW-0863">Zinc-finger</keyword>
<evidence type="ECO:0000250" key="1"/>
<evidence type="ECO:0000250" key="2">
    <source>
        <dbReference type="UniProtKB" id="Q9NW64"/>
    </source>
</evidence>
<evidence type="ECO:0000255" key="3">
    <source>
        <dbReference type="PROSITE-ProRule" id="PRU00176"/>
    </source>
</evidence>
<evidence type="ECO:0000255" key="4">
    <source>
        <dbReference type="PROSITE-ProRule" id="PRU00723"/>
    </source>
</evidence>
<evidence type="ECO:0000256" key="5">
    <source>
        <dbReference type="SAM" id="MobiDB-lite"/>
    </source>
</evidence>
<evidence type="ECO:0000305" key="6"/>
<reference key="1">
    <citation type="journal article" date="2005" name="Genome Biol.">
        <title>Full-length cDNAs from chicken bursal lymphocytes to facilitate gene function analysis.</title>
        <authorList>
            <person name="Caldwell R.B."/>
            <person name="Kierzek A.M."/>
            <person name="Arakawa H."/>
            <person name="Bezzubov Y."/>
            <person name="Zaim J."/>
            <person name="Fiedler P."/>
            <person name="Kutter S."/>
            <person name="Blagodatski A."/>
            <person name="Kostovska D."/>
            <person name="Koter M."/>
            <person name="Plachy J."/>
            <person name="Carninci P."/>
            <person name="Hayashizaki Y."/>
            <person name="Buerstedde J.-M."/>
        </authorList>
    </citation>
    <scope>NUCLEOTIDE SEQUENCE [LARGE SCALE MRNA]</scope>
    <source>
        <strain>CB</strain>
        <tissue>Bursa of Fabricius</tissue>
    </source>
</reference>
<protein>
    <recommendedName>
        <fullName>Pre-mRNA-splicing factor RBM22</fullName>
    </recommendedName>
    <alternativeName>
        <fullName>RNA-binding motif protein 22</fullName>
    </alternativeName>
</protein>